<gene>
    <name evidence="5" type="primary">GIS3</name>
    <name evidence="7" type="ordered locus">At1g68360</name>
    <name evidence="8" type="ORF">T22E19.1</name>
</gene>
<name>GIS3_ARATH</name>
<comment type="function">
    <text evidence="4">Probable transcription factor required for the initiation of inflorescence trichomes in response to gibberellin and cytokinin. Acts upstream of GIS, GIS2, ZFP8, and the trichome initiation factors GL1 and GL3. Binds the promoter region of GIS and GIS2, which may be direct targets of GIS3.</text>
</comment>
<comment type="interaction">
    <interactant intactId="EBI-15194063">
        <id>Q9C9H1</id>
    </interactant>
    <interactant intactId="EBI-15191535">
        <id>O80748</id>
        <label>BBX26</label>
    </interactant>
    <organismsDiffer>false</organismsDiffer>
    <experiments>3</experiments>
</comment>
<comment type="interaction">
    <interactant intactId="EBI-15194063">
        <id>Q9C9H1</id>
    </interactant>
    <interactant intactId="EBI-3133327">
        <id>O82277</id>
        <label>TCP10</label>
    </interactant>
    <organismsDiffer>false</organismsDiffer>
    <experiments>3</experiments>
</comment>
<comment type="interaction">
    <interactant intactId="EBI-15194063">
        <id>Q9C9H1</id>
    </interactant>
    <interactant intactId="EBI-4424563">
        <id>Q93Z00</id>
        <label>TCP14</label>
    </interactant>
    <organismsDiffer>false</organismsDiffer>
    <experiments>3</experiments>
</comment>
<comment type="interaction">
    <interactant intactId="EBI-15194063">
        <id>Q9C9H1</id>
    </interactant>
    <interactant intactId="EBI-4426144">
        <id>Q9C9L2</id>
        <label>TCP15</label>
    </interactant>
    <organismsDiffer>false</organismsDiffer>
    <experiments>3</experiments>
</comment>
<comment type="interaction">
    <interactant intactId="EBI-15194063">
        <id>Q9C9H1</id>
    </interactant>
    <interactant intactId="EBI-4426178">
        <id>Q9LT89</id>
        <label>TCP19</label>
    </interactant>
    <organismsDiffer>false</organismsDiffer>
    <experiments>4</experiments>
</comment>
<comment type="interaction">
    <interactant intactId="EBI-15194063">
        <id>Q9C9H1</id>
    </interactant>
    <interactant intactId="EBI-9838721">
        <id>O64647</id>
        <label>TCP9</label>
    </interactant>
    <organismsDiffer>false</organismsDiffer>
    <experiments>3</experiments>
</comment>
<comment type="subcellular location">
    <subcellularLocation>
        <location evidence="1">Nucleus</location>
    </subcellularLocation>
</comment>
<comment type="disruption phenotype">
    <text evidence="4">Decreased number of trichomes in cauline leaves, lateral branches, sepals and main stems.</text>
</comment>
<comment type="miscellaneous">
    <text evidence="4">Plants over-expressing GIS3 have increased trichome densities in sepals, cauline leaves, lateral branches, main inflorescence stems, and have ectopic trichomes on carpels.</text>
</comment>
<evidence type="ECO:0000250" key="1">
    <source>
        <dbReference type="UniProtKB" id="Q9SLB8"/>
    </source>
</evidence>
<evidence type="ECO:0000255" key="2">
    <source>
        <dbReference type="PROSITE-ProRule" id="PRU00042"/>
    </source>
</evidence>
<evidence type="ECO:0000256" key="3">
    <source>
        <dbReference type="SAM" id="MobiDB-lite"/>
    </source>
</evidence>
<evidence type="ECO:0000269" key="4">
    <source>
    </source>
</evidence>
<evidence type="ECO:0000303" key="5">
    <source>
    </source>
</evidence>
<evidence type="ECO:0000305" key="6"/>
<evidence type="ECO:0000312" key="7">
    <source>
        <dbReference type="Araport" id="AT1G68360"/>
    </source>
</evidence>
<evidence type="ECO:0000312" key="8">
    <source>
        <dbReference type="EMBL" id="AAG52593.1"/>
    </source>
</evidence>
<feature type="chain" id="PRO_0000438923" description="Zinc finger protein GIS3">
    <location>
        <begin position="1"/>
        <end position="244"/>
    </location>
</feature>
<feature type="zinc finger region" description="C2H2-type" evidence="2">
    <location>
        <begin position="73"/>
        <end position="95"/>
    </location>
</feature>
<feature type="region of interest" description="Disordered" evidence="3">
    <location>
        <begin position="26"/>
        <end position="69"/>
    </location>
</feature>
<feature type="compositionally biased region" description="Polar residues" evidence="3">
    <location>
        <begin position="30"/>
        <end position="41"/>
    </location>
</feature>
<feature type="compositionally biased region" description="Gly residues" evidence="3">
    <location>
        <begin position="53"/>
        <end position="68"/>
    </location>
</feature>
<reference key="1">
    <citation type="journal article" date="2000" name="Nature">
        <title>Sequence and analysis of chromosome 1 of the plant Arabidopsis thaliana.</title>
        <authorList>
            <person name="Theologis A."/>
            <person name="Ecker J.R."/>
            <person name="Palm C.J."/>
            <person name="Federspiel N.A."/>
            <person name="Kaul S."/>
            <person name="White O."/>
            <person name="Alonso J."/>
            <person name="Altafi H."/>
            <person name="Araujo R."/>
            <person name="Bowman C.L."/>
            <person name="Brooks S.Y."/>
            <person name="Buehler E."/>
            <person name="Chan A."/>
            <person name="Chao Q."/>
            <person name="Chen H."/>
            <person name="Cheuk R.F."/>
            <person name="Chin C.W."/>
            <person name="Chung M.K."/>
            <person name="Conn L."/>
            <person name="Conway A.B."/>
            <person name="Conway A.R."/>
            <person name="Creasy T.H."/>
            <person name="Dewar K."/>
            <person name="Dunn P."/>
            <person name="Etgu P."/>
            <person name="Feldblyum T.V."/>
            <person name="Feng J.-D."/>
            <person name="Fong B."/>
            <person name="Fujii C.Y."/>
            <person name="Gill J.E."/>
            <person name="Goldsmith A.D."/>
            <person name="Haas B."/>
            <person name="Hansen N.F."/>
            <person name="Hughes B."/>
            <person name="Huizar L."/>
            <person name="Hunter J.L."/>
            <person name="Jenkins J."/>
            <person name="Johnson-Hopson C."/>
            <person name="Khan S."/>
            <person name="Khaykin E."/>
            <person name="Kim C.J."/>
            <person name="Koo H.L."/>
            <person name="Kremenetskaia I."/>
            <person name="Kurtz D.B."/>
            <person name="Kwan A."/>
            <person name="Lam B."/>
            <person name="Langin-Hooper S."/>
            <person name="Lee A."/>
            <person name="Lee J.M."/>
            <person name="Lenz C.A."/>
            <person name="Li J.H."/>
            <person name="Li Y.-P."/>
            <person name="Lin X."/>
            <person name="Liu S.X."/>
            <person name="Liu Z.A."/>
            <person name="Luros J.S."/>
            <person name="Maiti R."/>
            <person name="Marziali A."/>
            <person name="Militscher J."/>
            <person name="Miranda M."/>
            <person name="Nguyen M."/>
            <person name="Nierman W.C."/>
            <person name="Osborne B.I."/>
            <person name="Pai G."/>
            <person name="Peterson J."/>
            <person name="Pham P.K."/>
            <person name="Rizzo M."/>
            <person name="Rooney T."/>
            <person name="Rowley D."/>
            <person name="Sakano H."/>
            <person name="Salzberg S.L."/>
            <person name="Schwartz J.R."/>
            <person name="Shinn P."/>
            <person name="Southwick A.M."/>
            <person name="Sun H."/>
            <person name="Tallon L.J."/>
            <person name="Tambunga G."/>
            <person name="Toriumi M.J."/>
            <person name="Town C.D."/>
            <person name="Utterback T."/>
            <person name="Van Aken S."/>
            <person name="Vaysberg M."/>
            <person name="Vysotskaia V.S."/>
            <person name="Walker M."/>
            <person name="Wu D."/>
            <person name="Yu G."/>
            <person name="Fraser C.M."/>
            <person name="Venter J.C."/>
            <person name="Davis R.W."/>
        </authorList>
    </citation>
    <scope>NUCLEOTIDE SEQUENCE [LARGE SCALE GENOMIC DNA]</scope>
    <source>
        <strain>cv. Columbia</strain>
    </source>
</reference>
<reference key="2">
    <citation type="journal article" date="2017" name="Plant J.">
        <title>Araport11: a complete reannotation of the Arabidopsis thaliana reference genome.</title>
        <authorList>
            <person name="Cheng C.Y."/>
            <person name="Krishnakumar V."/>
            <person name="Chan A.P."/>
            <person name="Thibaud-Nissen F."/>
            <person name="Schobel S."/>
            <person name="Town C.D."/>
        </authorList>
    </citation>
    <scope>GENOME REANNOTATION</scope>
    <source>
        <strain>cv. Columbia</strain>
    </source>
</reference>
<reference key="3">
    <citation type="submission" date="2006-11" db="EMBL/GenBank/DDBJ databases">
        <title>Arabidopsis ORF Clones.</title>
        <authorList>
            <person name="Bautista V.R."/>
            <person name="Kim C.J."/>
            <person name="Chen H."/>
            <person name="Quinitio C."/>
            <person name="Ecker J.R."/>
        </authorList>
    </citation>
    <scope>NUCLEOTIDE SEQUENCE [LARGE SCALE MRNA]</scope>
    <source>
        <strain>cv. Columbia</strain>
    </source>
</reference>
<reference key="4">
    <citation type="submission" date="2009-03" db="EMBL/GenBank/DDBJ databases">
        <title>ORF cloning and analysis of Arabidopsis transcription factor genes.</title>
        <authorList>
            <person name="Fujita M."/>
            <person name="Mizukado S."/>
            <person name="Seki M."/>
            <person name="Shinozaki K."/>
            <person name="Mitsuda N."/>
            <person name="Takiguchi Y."/>
            <person name="Takagi M."/>
        </authorList>
    </citation>
    <scope>NUCLEOTIDE SEQUENCE [LARGE SCALE MRNA]</scope>
</reference>
<reference key="5">
    <citation type="journal article" date="2015" name="New Phytol.">
        <title>GLABROUS INFLORESCENCE STEMS3 (GIS3) regulates trichome initiation and development in Arabidopsis.</title>
        <authorList>
            <person name="Sun L."/>
            <person name="Zhang A."/>
            <person name="Zhou Z."/>
            <person name="Zhao Y."/>
            <person name="Yan A."/>
            <person name="Bao S."/>
            <person name="Yu H."/>
            <person name="Gan Y."/>
        </authorList>
    </citation>
    <scope>FUNCTION</scope>
    <scope>DISRUPTION PHENOTYPE</scope>
</reference>
<dbReference type="EMBL" id="AC016447">
    <property type="protein sequence ID" value="AAG52593.1"/>
    <property type="molecule type" value="Genomic_DNA"/>
</dbReference>
<dbReference type="EMBL" id="CP002684">
    <property type="protein sequence ID" value="AEE34785.1"/>
    <property type="molecule type" value="Genomic_DNA"/>
</dbReference>
<dbReference type="EMBL" id="BT029451">
    <property type="protein sequence ID" value="ABK59680.1"/>
    <property type="molecule type" value="mRNA"/>
</dbReference>
<dbReference type="EMBL" id="AB493526">
    <property type="protein sequence ID" value="BAH30364.1"/>
    <property type="molecule type" value="mRNA"/>
</dbReference>
<dbReference type="PIR" id="D96707">
    <property type="entry name" value="D96707"/>
</dbReference>
<dbReference type="RefSeq" id="NP_177003.1">
    <property type="nucleotide sequence ID" value="NM_105507.2"/>
</dbReference>
<dbReference type="FunCoup" id="Q9C9H1">
    <property type="interactions" value="463"/>
</dbReference>
<dbReference type="IntAct" id="Q9C9H1">
    <property type="interactions" value="21"/>
</dbReference>
<dbReference type="STRING" id="3702.Q9C9H1"/>
<dbReference type="iPTMnet" id="Q9C9H1"/>
<dbReference type="PaxDb" id="3702-AT1G68360.1"/>
<dbReference type="ProteomicsDB" id="220768"/>
<dbReference type="EnsemblPlants" id="AT1G68360.1">
    <property type="protein sequence ID" value="AT1G68360.1"/>
    <property type="gene ID" value="AT1G68360"/>
</dbReference>
<dbReference type="GeneID" id="843165"/>
<dbReference type="Gramene" id="AT1G68360.1">
    <property type="protein sequence ID" value="AT1G68360.1"/>
    <property type="gene ID" value="AT1G68360"/>
</dbReference>
<dbReference type="KEGG" id="ath:AT1G68360"/>
<dbReference type="Araport" id="AT1G68360"/>
<dbReference type="TAIR" id="AT1G68360">
    <property type="gene designation" value="GIS3"/>
</dbReference>
<dbReference type="eggNOG" id="ENOG502QTV9">
    <property type="taxonomic scope" value="Eukaryota"/>
</dbReference>
<dbReference type="HOGENOM" id="CLU_091153_0_0_1"/>
<dbReference type="InParanoid" id="Q9C9H1"/>
<dbReference type="OMA" id="MGGPWMY"/>
<dbReference type="OrthoDB" id="772256at2759"/>
<dbReference type="PhylomeDB" id="Q9C9H1"/>
<dbReference type="PRO" id="PR:Q9C9H1"/>
<dbReference type="Proteomes" id="UP000006548">
    <property type="component" value="Chromosome 1"/>
</dbReference>
<dbReference type="ExpressionAtlas" id="Q9C9H1">
    <property type="expression patterns" value="baseline and differential"/>
</dbReference>
<dbReference type="GO" id="GO:0005634">
    <property type="term" value="C:nucleus"/>
    <property type="evidence" value="ECO:0000314"/>
    <property type="project" value="TAIR"/>
</dbReference>
<dbReference type="GO" id="GO:0003700">
    <property type="term" value="F:DNA-binding transcription factor activity"/>
    <property type="evidence" value="ECO:0000353"/>
    <property type="project" value="TAIR"/>
</dbReference>
<dbReference type="GO" id="GO:0000976">
    <property type="term" value="F:transcription cis-regulatory region binding"/>
    <property type="evidence" value="ECO:0000353"/>
    <property type="project" value="TAIR"/>
</dbReference>
<dbReference type="GO" id="GO:0008270">
    <property type="term" value="F:zinc ion binding"/>
    <property type="evidence" value="ECO:0007669"/>
    <property type="project" value="UniProtKB-KW"/>
</dbReference>
<dbReference type="GO" id="GO:0009736">
    <property type="term" value="P:cytokinin-activated signaling pathway"/>
    <property type="evidence" value="ECO:0000270"/>
    <property type="project" value="TAIR"/>
</dbReference>
<dbReference type="GO" id="GO:0009740">
    <property type="term" value="P:gibberellic acid mediated signaling pathway"/>
    <property type="evidence" value="ECO:0000315"/>
    <property type="project" value="TAIR"/>
</dbReference>
<dbReference type="GO" id="GO:0019760">
    <property type="term" value="P:glucosinolate metabolic process"/>
    <property type="evidence" value="ECO:0000315"/>
    <property type="project" value="TAIR"/>
</dbReference>
<dbReference type="GO" id="GO:0006355">
    <property type="term" value="P:regulation of DNA-templated transcription"/>
    <property type="evidence" value="ECO:0000304"/>
    <property type="project" value="TAIR"/>
</dbReference>
<dbReference type="GO" id="GO:0010090">
    <property type="term" value="P:trichome morphogenesis"/>
    <property type="evidence" value="ECO:0000315"/>
    <property type="project" value="TAIR"/>
</dbReference>
<dbReference type="FunFam" id="3.30.160.60:FF:002424">
    <property type="entry name" value="Zinc finger protein GIS3"/>
    <property type="match status" value="1"/>
</dbReference>
<dbReference type="Gene3D" id="3.30.160.60">
    <property type="entry name" value="Classic Zinc Finger"/>
    <property type="match status" value="1"/>
</dbReference>
<dbReference type="InterPro" id="IPR044299">
    <property type="entry name" value="GIS3/ZFP5/ZFP6"/>
</dbReference>
<dbReference type="InterPro" id="IPR036236">
    <property type="entry name" value="Znf_C2H2_sf"/>
</dbReference>
<dbReference type="InterPro" id="IPR013087">
    <property type="entry name" value="Znf_C2H2_type"/>
</dbReference>
<dbReference type="PANTHER" id="PTHR46353">
    <property type="entry name" value="ZINC FINGER PROTEIN 5"/>
    <property type="match status" value="1"/>
</dbReference>
<dbReference type="PANTHER" id="PTHR46353:SF9">
    <property type="entry name" value="ZINC FINGER PROTEIN GIS3"/>
    <property type="match status" value="1"/>
</dbReference>
<dbReference type="SUPFAM" id="SSF57667">
    <property type="entry name" value="beta-beta-alpha zinc fingers"/>
    <property type="match status" value="1"/>
</dbReference>
<dbReference type="PROSITE" id="PS00028">
    <property type="entry name" value="ZINC_FINGER_C2H2_1"/>
    <property type="match status" value="1"/>
</dbReference>
<dbReference type="PROSITE" id="PS50157">
    <property type="entry name" value="ZINC_FINGER_C2H2_2"/>
    <property type="match status" value="1"/>
</dbReference>
<organism>
    <name type="scientific">Arabidopsis thaliana</name>
    <name type="common">Mouse-ear cress</name>
    <dbReference type="NCBI Taxonomy" id="3702"/>
    <lineage>
        <taxon>Eukaryota</taxon>
        <taxon>Viridiplantae</taxon>
        <taxon>Streptophyta</taxon>
        <taxon>Embryophyta</taxon>
        <taxon>Tracheophyta</taxon>
        <taxon>Spermatophyta</taxon>
        <taxon>Magnoliopsida</taxon>
        <taxon>eudicotyledons</taxon>
        <taxon>Gunneridae</taxon>
        <taxon>Pentapetalae</taxon>
        <taxon>rosids</taxon>
        <taxon>malvids</taxon>
        <taxon>Brassicales</taxon>
        <taxon>Brassicaceae</taxon>
        <taxon>Camelineae</taxon>
        <taxon>Arabidopsis</taxon>
    </lineage>
</organism>
<protein>
    <recommendedName>
        <fullName evidence="6">Zinc finger protein GIS3</fullName>
    </recommendedName>
    <alternativeName>
        <fullName evidence="5">Protein GLABROUS INFLORESCENCE STEMS 3</fullName>
    </alternativeName>
</protein>
<proteinExistence type="evidence at protein level"/>
<keyword id="KW-0932">Cytokinin signaling pathway</keyword>
<keyword id="KW-0217">Developmental protein</keyword>
<keyword id="KW-0221">Differentiation</keyword>
<keyword id="KW-0939">Gibberellin signaling pathway</keyword>
<keyword id="KW-0479">Metal-binding</keyword>
<keyword id="KW-0539">Nucleus</keyword>
<keyword id="KW-1185">Reference proteome</keyword>
<keyword id="KW-0804">Transcription</keyword>
<keyword id="KW-0805">Transcription regulation</keyword>
<keyword id="KW-0862">Zinc</keyword>
<keyword id="KW-0863">Zinc-finger</keyword>
<sequence length="244" mass="25600">MEELDFSSKTTTSRLKLFGFSVDGEEDFSDQSVKTNLSSVSPERGEFPAGSSGRSGGGVRSRGGGGGGGERKYECQYCCREFGNSQALGGHQNAHKKERQQLKRAQLQATRNAAANFSNAGSASQFLRNPIVSAFAPPPHLLSSSAVPQPMGGPWMYLPRVSPSQLHVSHGCVIQDGSGGAGAGGFSYEYGARDSGFGVVGAQMRHVQAHGPRPSVNGFSREVGTTFDDGLGLDLHLSLAPAGH</sequence>
<accession>Q9C9H1</accession>